<accession>P31733</accession>
<reference key="1">
    <citation type="journal article" date="1993" name="J. Bacteriol.">
        <title>Isolation and analysis of eight exe genes and their involvement in extracellular protein secretion and outer membrane assembly in Aeromonas hydrophila.</title>
        <authorList>
            <person name="Howard S.P."/>
            <person name="Critch J."/>
            <person name="Bedi A."/>
        </authorList>
    </citation>
    <scope>NUCLEOTIDE SEQUENCE [GENOMIC DNA]</scope>
    <source>
        <strain>Ah65</strain>
    </source>
</reference>
<reference key="2">
    <citation type="journal article" date="1992" name="Mol. Microbiol.">
        <title>The Aeromonas hydrophila exeE gene, required both for protein secretion and normal outer membrane biogenesis, is a member of a general secretion pathway.</title>
        <authorList>
            <person name="Jiang B."/>
            <person name="Howard S.P."/>
        </authorList>
    </citation>
    <scope>NUCLEOTIDE SEQUENCE [GENOMIC DNA] OF 1-128</scope>
    <source>
        <strain>Ah65</strain>
    </source>
</reference>
<feature type="propeptide" id="PRO_0000449504" description="Leader sequence" evidence="3">
    <location>
        <begin position="1"/>
        <end position="8"/>
    </location>
</feature>
<feature type="chain" id="PRO_0000024199" description="Type II secretion system core protein G">
    <location>
        <begin position="9"/>
        <end position="143"/>
    </location>
</feature>
<feature type="transmembrane region" description="Helical" evidence="2">
    <location>
        <begin position="9"/>
        <end position="29"/>
    </location>
</feature>
<feature type="region of interest" description="Disordered" evidence="4">
    <location>
        <begin position="70"/>
        <end position="92"/>
    </location>
</feature>
<feature type="modified residue" description="N-methylphenylalanine" evidence="3">
    <location>
        <position position="9"/>
    </location>
</feature>
<evidence type="ECO:0000250" key="1">
    <source>
        <dbReference type="UniProtKB" id="Q00514"/>
    </source>
</evidence>
<evidence type="ECO:0000255" key="2"/>
<evidence type="ECO:0000255" key="3">
    <source>
        <dbReference type="PROSITE-ProRule" id="PRU01070"/>
    </source>
</evidence>
<evidence type="ECO:0000256" key="4">
    <source>
        <dbReference type="SAM" id="MobiDB-lite"/>
    </source>
</evidence>
<evidence type="ECO:0000305" key="5"/>
<name>GSPG_AERHY</name>
<organism>
    <name type="scientific">Aeromonas hydrophila</name>
    <dbReference type="NCBI Taxonomy" id="644"/>
    <lineage>
        <taxon>Bacteria</taxon>
        <taxon>Pseudomonadati</taxon>
        <taxon>Pseudomonadota</taxon>
        <taxon>Gammaproteobacteria</taxon>
        <taxon>Aeromonadales</taxon>
        <taxon>Aeromonadaceae</taxon>
        <taxon>Aeromonas</taxon>
    </lineage>
</organism>
<proteinExistence type="inferred from homology"/>
<protein>
    <recommendedName>
        <fullName>Type II secretion system core protein G</fullName>
        <shortName>T2SS core protein G</shortName>
    </recommendedName>
    <alternativeName>
        <fullName>General secretion pathway protein G</fullName>
    </alternativeName>
</protein>
<dbReference type="EMBL" id="X66504">
    <property type="protein sequence ID" value="CAA47128.1"/>
    <property type="molecule type" value="Genomic_DNA"/>
</dbReference>
<dbReference type="PIR" id="S22910">
    <property type="entry name" value="I49905"/>
</dbReference>
<dbReference type="SMR" id="P31733"/>
<dbReference type="eggNOG" id="COG2165">
    <property type="taxonomic scope" value="Bacteria"/>
</dbReference>
<dbReference type="GO" id="GO:0005886">
    <property type="term" value="C:plasma membrane"/>
    <property type="evidence" value="ECO:0007669"/>
    <property type="project" value="UniProtKB-SubCell"/>
</dbReference>
<dbReference type="GO" id="GO:0015627">
    <property type="term" value="C:type II protein secretion system complex"/>
    <property type="evidence" value="ECO:0007669"/>
    <property type="project" value="InterPro"/>
</dbReference>
<dbReference type="GO" id="GO:0015628">
    <property type="term" value="P:protein secretion by the type II secretion system"/>
    <property type="evidence" value="ECO:0007669"/>
    <property type="project" value="InterPro"/>
</dbReference>
<dbReference type="FunFam" id="3.30.700.10:FF:000001">
    <property type="entry name" value="General secretion pathway protein G"/>
    <property type="match status" value="1"/>
</dbReference>
<dbReference type="Gene3D" id="3.30.700.10">
    <property type="entry name" value="Glycoprotein, Type 4 Pilin"/>
    <property type="match status" value="1"/>
</dbReference>
<dbReference type="InterPro" id="IPR000983">
    <property type="entry name" value="Bac_GSPG_pilin"/>
</dbReference>
<dbReference type="InterPro" id="IPR012902">
    <property type="entry name" value="N_methyl_site"/>
</dbReference>
<dbReference type="InterPro" id="IPR045584">
    <property type="entry name" value="Pilin-like"/>
</dbReference>
<dbReference type="InterPro" id="IPR013545">
    <property type="entry name" value="T2SS_protein-GspG_C"/>
</dbReference>
<dbReference type="InterPro" id="IPR050470">
    <property type="entry name" value="T4P/T2SS_Core"/>
</dbReference>
<dbReference type="InterPro" id="IPR010054">
    <property type="entry name" value="Type2_sec_GspG"/>
</dbReference>
<dbReference type="NCBIfam" id="TIGR02532">
    <property type="entry name" value="IV_pilin_GFxxxE"/>
    <property type="match status" value="1"/>
</dbReference>
<dbReference type="NCBIfam" id="TIGR01710">
    <property type="entry name" value="typeII_sec_gspG"/>
    <property type="match status" value="1"/>
</dbReference>
<dbReference type="PANTHER" id="PTHR30093">
    <property type="entry name" value="GENERAL SECRETION PATHWAY PROTEIN G"/>
    <property type="match status" value="1"/>
</dbReference>
<dbReference type="PANTHER" id="PTHR30093:SF44">
    <property type="entry name" value="TYPE II SECRETION SYSTEM CORE PROTEIN G"/>
    <property type="match status" value="1"/>
</dbReference>
<dbReference type="Pfam" id="PF07963">
    <property type="entry name" value="N_methyl"/>
    <property type="match status" value="1"/>
</dbReference>
<dbReference type="Pfam" id="PF08334">
    <property type="entry name" value="T2SSG"/>
    <property type="match status" value="1"/>
</dbReference>
<dbReference type="PRINTS" id="PR00813">
    <property type="entry name" value="BCTERIALGSPG"/>
</dbReference>
<dbReference type="SUPFAM" id="SSF54523">
    <property type="entry name" value="Pili subunits"/>
    <property type="match status" value="1"/>
</dbReference>
<dbReference type="PROSITE" id="PS00409">
    <property type="entry name" value="PROKAR_NTER_METHYL"/>
    <property type="match status" value="1"/>
</dbReference>
<comment type="function">
    <text evidence="1">Core component of the type II secretion system required for the energy-dependent secretion of extracellular factors such as proteases and toxins from the periplasm. Pseudopilin (pilin-like) protein that polymerizes to form the pseudopilus. Further polymerization triggers pseudopilus growth.</text>
</comment>
<comment type="subunit">
    <text evidence="1">Type II secretion system is composed of four main components: the outer membrane complex, the inner membrane complex, the cytoplasmic secretion ATPase and the periplasm-spanning pseudopilus. Forms homomultimers.</text>
</comment>
<comment type="subcellular location">
    <subcellularLocation>
        <location evidence="1">Cell inner membrane</location>
        <topology evidence="2">Single-pass membrane protein</topology>
    </subcellularLocation>
</comment>
<comment type="PTM">
    <text evidence="1">Cleaved by the prepilin peptidase.</text>
</comment>
<comment type="PTM">
    <text evidence="1">Methylated by prepilin peptidase at the amino group of the N-terminal phenylalanine once the leader sequence is cleaved.</text>
</comment>
<comment type="similarity">
    <text evidence="5">Belongs to the GSP G family.</text>
</comment>
<gene>
    <name type="primary">exeG</name>
</gene>
<keyword id="KW-0997">Cell inner membrane</keyword>
<keyword id="KW-1003">Cell membrane</keyword>
<keyword id="KW-0472">Membrane</keyword>
<keyword id="KW-0488">Methylation</keyword>
<keyword id="KW-0653">Protein transport</keyword>
<keyword id="KW-0812">Transmembrane</keyword>
<keyword id="KW-1133">Transmembrane helix</keyword>
<keyword id="KW-0813">Transport</keyword>
<sequence length="143" mass="15902">MQKRRQSGFTLLEVMVVIVILGILASLVVPNLMGNKEKADQQKAVSDIVALENALDMYKLDNNRYPTTEQGLDALVNKPTAAPEPRSYRDGGYIKRLPQDPWGNPYQMLSPGQFGKIDIFSMGLDGEAGTDDDIGNWNLKDFQ</sequence>